<protein>
    <recommendedName>
        <fullName evidence="1">ATP synthase subunit c</fullName>
    </recommendedName>
    <alternativeName>
        <fullName evidence="1">ATP synthase F(0) sector subunit c</fullName>
    </alternativeName>
    <alternativeName>
        <fullName evidence="1">F-type ATPase subunit c</fullName>
        <shortName evidence="1">F-ATPase subunit c</shortName>
    </alternativeName>
    <alternativeName>
        <fullName evidence="1">Lipid-binding protein</fullName>
    </alternativeName>
</protein>
<keyword id="KW-0066">ATP synthesis</keyword>
<keyword id="KW-1003">Cell membrane</keyword>
<keyword id="KW-0138">CF(0)</keyword>
<keyword id="KW-0375">Hydrogen ion transport</keyword>
<keyword id="KW-0406">Ion transport</keyword>
<keyword id="KW-0446">Lipid-binding</keyword>
<keyword id="KW-0472">Membrane</keyword>
<keyword id="KW-1185">Reference proteome</keyword>
<keyword id="KW-0812">Transmembrane</keyword>
<keyword id="KW-1133">Transmembrane helix</keyword>
<keyword id="KW-0813">Transport</keyword>
<sequence>MGSVLAEVAGSLASIGYGLAAIGSAIGVGIVVGKTVESVARQPELAKRLTVLMYVGVAFTEALALIGIGTYFLFR</sequence>
<dbReference type="EMBL" id="AE014184">
    <property type="protein sequence ID" value="AAO44526.1"/>
    <property type="molecule type" value="Genomic_DNA"/>
</dbReference>
<dbReference type="RefSeq" id="WP_011096291.1">
    <property type="nucleotide sequence ID" value="NC_004572.3"/>
</dbReference>
<dbReference type="SMR" id="Q83G86"/>
<dbReference type="STRING" id="203267.TWT_429"/>
<dbReference type="GeneID" id="67388112"/>
<dbReference type="KEGG" id="twh:TWT_429"/>
<dbReference type="eggNOG" id="COG0636">
    <property type="taxonomic scope" value="Bacteria"/>
</dbReference>
<dbReference type="HOGENOM" id="CLU_148047_5_2_11"/>
<dbReference type="OrthoDB" id="3183855at2"/>
<dbReference type="Proteomes" id="UP000002200">
    <property type="component" value="Chromosome"/>
</dbReference>
<dbReference type="GO" id="GO:0005886">
    <property type="term" value="C:plasma membrane"/>
    <property type="evidence" value="ECO:0007669"/>
    <property type="project" value="UniProtKB-SubCell"/>
</dbReference>
<dbReference type="GO" id="GO:0045259">
    <property type="term" value="C:proton-transporting ATP synthase complex"/>
    <property type="evidence" value="ECO:0007669"/>
    <property type="project" value="UniProtKB-KW"/>
</dbReference>
<dbReference type="GO" id="GO:0033177">
    <property type="term" value="C:proton-transporting two-sector ATPase complex, proton-transporting domain"/>
    <property type="evidence" value="ECO:0007669"/>
    <property type="project" value="InterPro"/>
</dbReference>
<dbReference type="GO" id="GO:0008289">
    <property type="term" value="F:lipid binding"/>
    <property type="evidence" value="ECO:0007669"/>
    <property type="project" value="UniProtKB-KW"/>
</dbReference>
<dbReference type="GO" id="GO:0046933">
    <property type="term" value="F:proton-transporting ATP synthase activity, rotational mechanism"/>
    <property type="evidence" value="ECO:0007669"/>
    <property type="project" value="UniProtKB-UniRule"/>
</dbReference>
<dbReference type="CDD" id="cd18121">
    <property type="entry name" value="ATP-synt_Fo_c"/>
    <property type="match status" value="1"/>
</dbReference>
<dbReference type="FunFam" id="1.20.20.10:FF:000002">
    <property type="entry name" value="ATP synthase subunit c"/>
    <property type="match status" value="1"/>
</dbReference>
<dbReference type="Gene3D" id="1.20.20.10">
    <property type="entry name" value="F1F0 ATP synthase subunit C"/>
    <property type="match status" value="1"/>
</dbReference>
<dbReference type="HAMAP" id="MF_01396">
    <property type="entry name" value="ATP_synth_c_bact"/>
    <property type="match status" value="1"/>
</dbReference>
<dbReference type="InterPro" id="IPR005953">
    <property type="entry name" value="ATP_synth_csu_bac/chlpt"/>
</dbReference>
<dbReference type="InterPro" id="IPR000454">
    <property type="entry name" value="ATP_synth_F0_csu"/>
</dbReference>
<dbReference type="InterPro" id="IPR020537">
    <property type="entry name" value="ATP_synth_F0_csu_DDCD_BS"/>
</dbReference>
<dbReference type="InterPro" id="IPR038662">
    <property type="entry name" value="ATP_synth_F0_csu_sf"/>
</dbReference>
<dbReference type="InterPro" id="IPR002379">
    <property type="entry name" value="ATPase_proteolipid_c-like_dom"/>
</dbReference>
<dbReference type="InterPro" id="IPR035921">
    <property type="entry name" value="F/V-ATP_Csub_sf"/>
</dbReference>
<dbReference type="NCBIfam" id="TIGR01260">
    <property type="entry name" value="ATP_synt_c"/>
    <property type="match status" value="1"/>
</dbReference>
<dbReference type="PANTHER" id="PTHR10031">
    <property type="entry name" value="ATP SYNTHASE LIPID-BINDING PROTEIN, MITOCHONDRIAL"/>
    <property type="match status" value="1"/>
</dbReference>
<dbReference type="PANTHER" id="PTHR10031:SF0">
    <property type="entry name" value="ATPASE PROTEIN 9"/>
    <property type="match status" value="1"/>
</dbReference>
<dbReference type="Pfam" id="PF00137">
    <property type="entry name" value="ATP-synt_C"/>
    <property type="match status" value="1"/>
</dbReference>
<dbReference type="PRINTS" id="PR00124">
    <property type="entry name" value="ATPASEC"/>
</dbReference>
<dbReference type="SUPFAM" id="SSF81333">
    <property type="entry name" value="F1F0 ATP synthase subunit C"/>
    <property type="match status" value="1"/>
</dbReference>
<dbReference type="PROSITE" id="PS00605">
    <property type="entry name" value="ATPASE_C"/>
    <property type="match status" value="1"/>
</dbReference>
<gene>
    <name evidence="1" type="primary">atpE</name>
    <name type="synonym">twt429</name>
    <name type="ordered locus">TWT_429</name>
</gene>
<reference key="1">
    <citation type="journal article" date="2003" name="Genome Res.">
        <title>Tropheryma whipplei twist: a human pathogenic Actinobacteria with a reduced genome.</title>
        <authorList>
            <person name="Raoult D."/>
            <person name="Ogata H."/>
            <person name="Audic S."/>
            <person name="Robert C."/>
            <person name="Suhre K."/>
            <person name="Drancourt M."/>
            <person name="Claverie J.-M."/>
        </authorList>
    </citation>
    <scope>NUCLEOTIDE SEQUENCE [LARGE SCALE GENOMIC DNA]</scope>
    <source>
        <strain>Twist</strain>
    </source>
</reference>
<comment type="function">
    <text evidence="1">F(1)F(0) ATP synthase produces ATP from ADP in the presence of a proton or sodium gradient. F-type ATPases consist of two structural domains, F(1) containing the extramembraneous catalytic core and F(0) containing the membrane proton channel, linked together by a central stalk and a peripheral stalk. During catalysis, ATP synthesis in the catalytic domain of F(1) is coupled via a rotary mechanism of the central stalk subunits to proton translocation.</text>
</comment>
<comment type="function">
    <text evidence="1">Key component of the F(0) channel; it plays a direct role in translocation across the membrane. A homomeric c-ring of between 10-14 subunits forms the central stalk rotor element with the F(1) delta and epsilon subunits.</text>
</comment>
<comment type="subunit">
    <text evidence="1">F-type ATPases have 2 components, F(1) - the catalytic core - and F(0) - the membrane proton channel. F(1) has five subunits: alpha(3), beta(3), gamma(1), delta(1), epsilon(1). F(0) has three main subunits: a(1), b(2) and c(10-14). The alpha and beta chains form an alternating ring which encloses part of the gamma chain. F(1) is attached to F(0) by a central stalk formed by the gamma and epsilon chains, while a peripheral stalk is formed by the delta and b chains.</text>
</comment>
<comment type="subcellular location">
    <subcellularLocation>
        <location evidence="1">Cell membrane</location>
        <topology evidence="1">Multi-pass membrane protein</topology>
    </subcellularLocation>
</comment>
<comment type="similarity">
    <text evidence="1">Belongs to the ATPase C chain family.</text>
</comment>
<evidence type="ECO:0000255" key="1">
    <source>
        <dbReference type="HAMAP-Rule" id="MF_01396"/>
    </source>
</evidence>
<organism>
    <name type="scientific">Tropheryma whipplei (strain Twist)</name>
    <name type="common">Whipple's bacillus</name>
    <dbReference type="NCBI Taxonomy" id="203267"/>
    <lineage>
        <taxon>Bacteria</taxon>
        <taxon>Bacillati</taxon>
        <taxon>Actinomycetota</taxon>
        <taxon>Actinomycetes</taxon>
        <taxon>Micrococcales</taxon>
        <taxon>Tropherymataceae</taxon>
        <taxon>Tropheryma</taxon>
    </lineage>
</organism>
<proteinExistence type="inferred from homology"/>
<feature type="chain" id="PRO_1000184526" description="ATP synthase subunit c">
    <location>
        <begin position="1"/>
        <end position="75"/>
    </location>
</feature>
<feature type="transmembrane region" description="Helical" evidence="1">
    <location>
        <begin position="12"/>
        <end position="32"/>
    </location>
</feature>
<feature type="transmembrane region" description="Helical" evidence="1">
    <location>
        <begin position="49"/>
        <end position="69"/>
    </location>
</feature>
<feature type="site" description="Reversibly protonated during proton transport" evidence="1">
    <location>
        <position position="61"/>
    </location>
</feature>
<name>ATPL_TROWT</name>
<accession>Q83G86</accession>